<organism>
    <name type="scientific">Bos taurus</name>
    <name type="common">Bovine</name>
    <dbReference type="NCBI Taxonomy" id="9913"/>
    <lineage>
        <taxon>Eukaryota</taxon>
        <taxon>Metazoa</taxon>
        <taxon>Chordata</taxon>
        <taxon>Craniata</taxon>
        <taxon>Vertebrata</taxon>
        <taxon>Euteleostomi</taxon>
        <taxon>Mammalia</taxon>
        <taxon>Eutheria</taxon>
        <taxon>Laurasiatheria</taxon>
        <taxon>Artiodactyla</taxon>
        <taxon>Ruminantia</taxon>
        <taxon>Pecora</taxon>
        <taxon>Bovidae</taxon>
        <taxon>Bovinae</taxon>
        <taxon>Bos</taxon>
    </lineage>
</organism>
<accession>Q58D84</accession>
<reference key="1">
    <citation type="journal article" date="2005" name="BMC Genomics">
        <title>Characterization of 954 bovine full-CDS cDNA sequences.</title>
        <authorList>
            <person name="Harhay G.P."/>
            <person name="Sonstegard T.S."/>
            <person name="Keele J.W."/>
            <person name="Heaton M.P."/>
            <person name="Clawson M.L."/>
            <person name="Snelling W.M."/>
            <person name="Wiedmann R.T."/>
            <person name="Van Tassell C.P."/>
            <person name="Smith T.P.L."/>
        </authorList>
    </citation>
    <scope>NUCLEOTIDE SEQUENCE [LARGE SCALE MRNA]</scope>
</reference>
<reference key="2">
    <citation type="submission" date="2006-04" db="EMBL/GenBank/DDBJ databases">
        <authorList>
            <consortium name="NIH - Mammalian Gene Collection (MGC) project"/>
        </authorList>
    </citation>
    <scope>NUCLEOTIDE SEQUENCE [LARGE SCALE MRNA]</scope>
    <source>
        <strain>Hereford</strain>
        <tissue>Uterus</tissue>
    </source>
</reference>
<comment type="function">
    <text evidence="1 2">Secreted glycoprotein that is involved in various physiological processes, such as angiogenesis, regulation of the immune response, cell proliferation and differentiation (By similarity). Plays a role in the development of the central nervous system, skeletal system, lungs, and ureter. Promotes endothelial cell survival, migration and differentiation into network structures in an AKT-dependent manner. Also promotes survival of cardiac myocytes (By similarity). Initiates various signaling cascades by activating different receptors on the cell surface such as DIP2A, TLR4 or BMP receptors (By similarity).</text>
</comment>
<comment type="subunit">
    <text evidence="1 2 3">Homodimer (By similarity). Interacts with SCN10A (By similarity). Interacts with DIP2A; DIP2A may act as a cell surface receptor for FSTL1. Interacts with BMP4. Interacts with CD14; this interaction promotes TL4-mediated signaling cascade (By similarity).</text>
</comment>
<comment type="subcellular location">
    <subcellularLocation>
        <location evidence="7">Secreted</location>
    </subcellularLocation>
</comment>
<gene>
    <name type="primary">FSTL1</name>
</gene>
<name>FSTL1_BOVIN</name>
<keyword id="KW-1015">Disulfide bond</keyword>
<keyword id="KW-0325">Glycoprotein</keyword>
<keyword id="KW-0358">Heparin-binding</keyword>
<keyword id="KW-0597">Phosphoprotein</keyword>
<keyword id="KW-1185">Reference proteome</keyword>
<keyword id="KW-0677">Repeat</keyword>
<keyword id="KW-0964">Secreted</keyword>
<keyword id="KW-0732">Signal</keyword>
<dbReference type="EMBL" id="BC114758">
    <property type="protein sequence ID" value="AAI14759.1"/>
    <property type="molecule type" value="mRNA"/>
</dbReference>
<dbReference type="EMBL" id="BT021713">
    <property type="protein sequence ID" value="AAX46560.1"/>
    <property type="molecule type" value="mRNA"/>
</dbReference>
<dbReference type="RefSeq" id="NP_001017950.1">
    <property type="nucleotide sequence ID" value="NM_001017950.2"/>
</dbReference>
<dbReference type="RefSeq" id="XP_005200261.1">
    <property type="nucleotide sequence ID" value="XM_005200204.2"/>
</dbReference>
<dbReference type="SMR" id="Q58D84"/>
<dbReference type="FunCoup" id="Q58D84">
    <property type="interactions" value="663"/>
</dbReference>
<dbReference type="STRING" id="9913.ENSBTAP00000073919"/>
<dbReference type="MEROPS" id="I01.967"/>
<dbReference type="GlyCosmos" id="Q58D84">
    <property type="glycosylation" value="3 sites, No reported glycans"/>
</dbReference>
<dbReference type="GlyGen" id="Q58D84">
    <property type="glycosylation" value="3 sites"/>
</dbReference>
<dbReference type="PaxDb" id="9913-ENSBTAP00000029886"/>
<dbReference type="Ensembl" id="ENSBTAT00000029891.4">
    <property type="protein sequence ID" value="ENSBTAP00000029886.3"/>
    <property type="gene ID" value="ENSBTAG00000022155.5"/>
</dbReference>
<dbReference type="GeneID" id="534482"/>
<dbReference type="KEGG" id="bta:534482"/>
<dbReference type="CTD" id="11167"/>
<dbReference type="VEuPathDB" id="HostDB:ENSBTAG00000022155"/>
<dbReference type="VGNC" id="VGNC:29135">
    <property type="gene designation" value="FSTL1"/>
</dbReference>
<dbReference type="eggNOG" id="ENOG502QQAG">
    <property type="taxonomic scope" value="Eukaryota"/>
</dbReference>
<dbReference type="GeneTree" id="ENSGT00940000157784"/>
<dbReference type="HOGENOM" id="CLU_038229_0_0_1"/>
<dbReference type="InParanoid" id="Q58D84"/>
<dbReference type="OMA" id="CIERCKP"/>
<dbReference type="OrthoDB" id="88467at2759"/>
<dbReference type="TreeFam" id="TF106409"/>
<dbReference type="Reactome" id="R-BTA-201451">
    <property type="pathway name" value="Signaling by BMP"/>
</dbReference>
<dbReference type="Reactome" id="R-BTA-381426">
    <property type="pathway name" value="Regulation of Insulin-like Growth Factor (IGF) transport and uptake by Insulin-like Growth Factor Binding Proteins (IGFBPs)"/>
</dbReference>
<dbReference type="Reactome" id="R-BTA-8957275">
    <property type="pathway name" value="Post-translational protein phosphorylation"/>
</dbReference>
<dbReference type="Proteomes" id="UP000009136">
    <property type="component" value="Chromosome 1"/>
</dbReference>
<dbReference type="Bgee" id="ENSBTAG00000022155">
    <property type="expression patterns" value="Expressed in subcutaneous adipose tissue and 106 other cell types or tissues"/>
</dbReference>
<dbReference type="GO" id="GO:0005576">
    <property type="term" value="C:extracellular region"/>
    <property type="evidence" value="ECO:0000318"/>
    <property type="project" value="GO_Central"/>
</dbReference>
<dbReference type="GO" id="GO:0005509">
    <property type="term" value="F:calcium ion binding"/>
    <property type="evidence" value="ECO:0007669"/>
    <property type="project" value="InterPro"/>
</dbReference>
<dbReference type="GO" id="GO:0008201">
    <property type="term" value="F:heparin binding"/>
    <property type="evidence" value="ECO:0007669"/>
    <property type="project" value="UniProtKB-KW"/>
</dbReference>
<dbReference type="GO" id="GO:0030154">
    <property type="term" value="P:cell differentiation"/>
    <property type="evidence" value="ECO:0000318"/>
    <property type="project" value="GO_Central"/>
</dbReference>
<dbReference type="GO" id="GO:0045446">
    <property type="term" value="P:endothelial cell differentiation"/>
    <property type="evidence" value="ECO:0000250"/>
    <property type="project" value="UniProtKB"/>
</dbReference>
<dbReference type="GO" id="GO:0043542">
    <property type="term" value="P:endothelial cell migration"/>
    <property type="evidence" value="ECO:0000250"/>
    <property type="project" value="UniProtKB"/>
</dbReference>
<dbReference type="GO" id="GO:0061484">
    <property type="term" value="P:hematopoietic stem cell homeostasis"/>
    <property type="evidence" value="ECO:0007669"/>
    <property type="project" value="Ensembl"/>
</dbReference>
<dbReference type="GO" id="GO:0043066">
    <property type="term" value="P:negative regulation of apoptotic process"/>
    <property type="evidence" value="ECO:0000250"/>
    <property type="project" value="UniProtKB"/>
</dbReference>
<dbReference type="GO" id="GO:0030510">
    <property type="term" value="P:regulation of BMP signaling pathway"/>
    <property type="evidence" value="ECO:0000318"/>
    <property type="project" value="GO_Central"/>
</dbReference>
<dbReference type="CDD" id="cd16233">
    <property type="entry name" value="EFh_SPARC_FSTL1"/>
    <property type="match status" value="1"/>
</dbReference>
<dbReference type="CDD" id="cd00104">
    <property type="entry name" value="KAZAL_FS"/>
    <property type="match status" value="1"/>
</dbReference>
<dbReference type="FunFam" id="3.30.60.30:FF:000017">
    <property type="entry name" value="Follistatin like 1"/>
    <property type="match status" value="1"/>
</dbReference>
<dbReference type="Gene3D" id="3.30.60.30">
    <property type="match status" value="1"/>
</dbReference>
<dbReference type="Gene3D" id="1.10.238.10">
    <property type="entry name" value="EF-hand"/>
    <property type="match status" value="1"/>
</dbReference>
<dbReference type="Gene3D" id="3.90.290.10">
    <property type="entry name" value="TGF-beta binding (TB) domain"/>
    <property type="match status" value="1"/>
</dbReference>
<dbReference type="InterPro" id="IPR011992">
    <property type="entry name" value="EF-hand-dom_pair"/>
</dbReference>
<dbReference type="InterPro" id="IPR057020">
    <property type="entry name" value="EF-hand_FSTL1"/>
</dbReference>
<dbReference type="InterPro" id="IPR002048">
    <property type="entry name" value="EF_hand_dom"/>
</dbReference>
<dbReference type="InterPro" id="IPR003645">
    <property type="entry name" value="Fol_N"/>
</dbReference>
<dbReference type="InterPro" id="IPR015369">
    <property type="entry name" value="Follistatin/Osteonectin_EGF"/>
</dbReference>
<dbReference type="InterPro" id="IPR002350">
    <property type="entry name" value="Kazal_dom"/>
</dbReference>
<dbReference type="InterPro" id="IPR036058">
    <property type="entry name" value="Kazal_dom_sf"/>
</dbReference>
<dbReference type="InterPro" id="IPR050653">
    <property type="entry name" value="Prot_Inhib_GrowthFact_Antg"/>
</dbReference>
<dbReference type="InterPro" id="IPR036773">
    <property type="entry name" value="TB_dom_sf"/>
</dbReference>
<dbReference type="PANTHER" id="PTHR10913">
    <property type="entry name" value="FOLLISTATIN-RELATED"/>
    <property type="match status" value="1"/>
</dbReference>
<dbReference type="PANTHER" id="PTHR10913:SF13">
    <property type="entry name" value="FOLLISTATIN-RELATED PROTEIN 1"/>
    <property type="match status" value="1"/>
</dbReference>
<dbReference type="Pfam" id="PF23564">
    <property type="entry name" value="EF-hand_FSTL1"/>
    <property type="match status" value="1"/>
</dbReference>
<dbReference type="Pfam" id="PF09289">
    <property type="entry name" value="FOLN"/>
    <property type="match status" value="1"/>
</dbReference>
<dbReference type="Pfam" id="PF07648">
    <property type="entry name" value="Kazal_2"/>
    <property type="match status" value="1"/>
</dbReference>
<dbReference type="Pfam" id="PF23244">
    <property type="entry name" value="VWF"/>
    <property type="match status" value="1"/>
</dbReference>
<dbReference type="SMART" id="SM00274">
    <property type="entry name" value="FOLN"/>
    <property type="match status" value="1"/>
</dbReference>
<dbReference type="SMART" id="SM00280">
    <property type="entry name" value="KAZAL"/>
    <property type="match status" value="1"/>
</dbReference>
<dbReference type="SUPFAM" id="SSF47473">
    <property type="entry name" value="EF-hand"/>
    <property type="match status" value="1"/>
</dbReference>
<dbReference type="SUPFAM" id="SSF57603">
    <property type="entry name" value="FnI-like domain"/>
    <property type="match status" value="1"/>
</dbReference>
<dbReference type="SUPFAM" id="SSF100895">
    <property type="entry name" value="Kazal-type serine protease inhibitors"/>
    <property type="match status" value="1"/>
</dbReference>
<dbReference type="PROSITE" id="PS50222">
    <property type="entry name" value="EF_HAND_2"/>
    <property type="match status" value="2"/>
</dbReference>
<dbReference type="PROSITE" id="PS51465">
    <property type="entry name" value="KAZAL_2"/>
    <property type="match status" value="1"/>
</dbReference>
<evidence type="ECO:0000250" key="1">
    <source>
        <dbReference type="UniProtKB" id="Q12841"/>
    </source>
</evidence>
<evidence type="ECO:0000250" key="2">
    <source>
        <dbReference type="UniProtKB" id="Q62356"/>
    </source>
</evidence>
<evidence type="ECO:0000250" key="3">
    <source>
        <dbReference type="UniProtKB" id="Q62632"/>
    </source>
</evidence>
<evidence type="ECO:0000255" key="4"/>
<evidence type="ECO:0000255" key="5">
    <source>
        <dbReference type="PROSITE-ProRule" id="PRU00448"/>
    </source>
</evidence>
<evidence type="ECO:0000255" key="6">
    <source>
        <dbReference type="PROSITE-ProRule" id="PRU00798"/>
    </source>
</evidence>
<evidence type="ECO:0000305" key="7"/>
<sequence>MMWRRWLALALVAVAWVHAEEQVRSKSKICANVFCGAGRECAVTEKGEPTCLCIEQCKPHKRPVCGSNGKTYLNHCELHRDACLTGSKIQVDYDGHCKEKKSVSPSASPVVCYQSNRDELRRRIIQWLEAEIIPDGWFSKGSNYSEILDKYFKNFDNGDSRLDSSEFLKFVEQNETAINITTYADQENNKLLRGLCVDALIELSDENADWKLSFQEFLKCLNPSFNPPEKKCALEDETYADGAETEVDCNRCVCACGNWVCTAMTCDGKNQKGAQTQAEEEMTRYVQELQKHQETAEKSKRVSTKEI</sequence>
<proteinExistence type="evidence at transcript level"/>
<feature type="signal peptide" evidence="1">
    <location>
        <begin position="1"/>
        <end position="19"/>
    </location>
</feature>
<feature type="chain" id="PRO_0000318092" description="Follistatin-related protein 1">
    <location>
        <begin position="20"/>
        <end position="307"/>
    </location>
</feature>
<feature type="domain" description="Follistatin-like">
    <location>
        <begin position="29"/>
        <end position="52"/>
    </location>
</feature>
<feature type="domain" description="Kazal-like" evidence="6">
    <location>
        <begin position="47"/>
        <end position="99"/>
    </location>
</feature>
<feature type="domain" description="EF-hand 1" evidence="5">
    <location>
        <begin position="143"/>
        <end position="177"/>
    </location>
</feature>
<feature type="domain" description="EF-hand 2" evidence="5">
    <location>
        <begin position="192"/>
        <end position="227"/>
    </location>
</feature>
<feature type="domain" description="VWFC">
    <location>
        <begin position="232"/>
        <end position="286"/>
    </location>
</feature>
<feature type="modified residue" description="Phosphoserine" evidence="1">
    <location>
        <position position="164"/>
    </location>
</feature>
<feature type="glycosylation site" description="N-linked (GlcNAc...) asparagine" evidence="4">
    <location>
        <position position="143"/>
    </location>
</feature>
<feature type="glycosylation site" description="N-linked (GlcNAc...) asparagine" evidence="4">
    <location>
        <position position="174"/>
    </location>
</feature>
<feature type="glycosylation site" description="N-linked (GlcNAc...) asparagine" evidence="4">
    <location>
        <position position="179"/>
    </location>
</feature>
<feature type="disulfide bond" evidence="2">
    <location>
        <begin position="30"/>
        <end position="41"/>
    </location>
</feature>
<feature type="disulfide bond" evidence="2">
    <location>
        <begin position="35"/>
        <end position="51"/>
    </location>
</feature>
<feature type="disulfide bond" evidence="6">
    <location>
        <begin position="53"/>
        <end position="83"/>
    </location>
</feature>
<feature type="disulfide bond" evidence="6">
    <location>
        <begin position="57"/>
        <end position="76"/>
    </location>
</feature>
<feature type="disulfide bond" evidence="6">
    <location>
        <begin position="65"/>
        <end position="97"/>
    </location>
</feature>
<protein>
    <recommendedName>
        <fullName>Follistatin-related protein 1</fullName>
    </recommendedName>
    <alternativeName>
        <fullName>Follistatin-like protein 1</fullName>
    </alternativeName>
</protein>